<name>A1AT_PAPAN</name>
<reference key="1">
    <citation type="journal article" date="1981" name="Proc. Natl. Acad. Sci. U.S.A.">
        <title>Cloning and sequence of cDNA coding for alpha 1-antitrypsin.</title>
        <authorList>
            <person name="Kurachi K."/>
            <person name="Chandra T."/>
            <person name="Friezner Degen S.J."/>
            <person name="White T.T."/>
            <person name="Marchioro T.L."/>
            <person name="Woo S.L.C."/>
            <person name="Davie E.W."/>
        </authorList>
    </citation>
    <scope>NUCLEOTIDE SEQUENCE [MRNA]</scope>
</reference>
<accession>P01010</accession>
<evidence type="ECO:0000250" key="1"/>
<evidence type="ECO:0000250" key="2">
    <source>
        <dbReference type="UniProtKB" id="P01009"/>
    </source>
</evidence>
<evidence type="ECO:0000255" key="3"/>
<evidence type="ECO:0000256" key="4">
    <source>
        <dbReference type="SAM" id="MobiDB-lite"/>
    </source>
</evidence>
<evidence type="ECO:0000305" key="5"/>
<sequence>LLLAGLCCLLPGSLAEDPQGDAAQKTDTPPHDQNHPTLNKITPSLAEFAFSLYRQLAHQSNSTNIFFSPVSIATAFAMLSLGTKADTHSEILEGLNFNLTEIPEAQVHEGFQELLRTLNKPDSQLQLTTGNGLFLNKSLKVVDKFLEDVKNLYHSEAFSVNFEDTEEAKKQINNYVEKGTQGKVVDLVKELDRDTVFALVNYIFFKGKWERPFEVEATEEEDFHVDQATTVKVPMMRRLGMFNIYHCEKLSSWVLLMKYLGNATAIFFLPDEGKLQHLENELTHDIITKFLENENRRSANLHLPKLAITGTYDLKTVLGHLGITKVFSNGADLSGVTEDAPLKLSKAVHKAVLTIDEKGTEAAGAMFLEAIPMSIPPEVKFNKPFVFLMIEQNTKSPLFIGKVVNPTQK</sequence>
<dbReference type="EMBL" id="J00321">
    <property type="protein sequence ID" value="AAA35377.1"/>
    <property type="molecule type" value="mRNA"/>
</dbReference>
<dbReference type="SMR" id="P01010"/>
<dbReference type="STRING" id="9555.ENSPANP00000013142"/>
<dbReference type="MEROPS" id="I04.001"/>
<dbReference type="GlyCosmos" id="P01010">
    <property type="glycosylation" value="4 sites, No reported glycans"/>
</dbReference>
<dbReference type="eggNOG" id="KOG2392">
    <property type="taxonomic scope" value="Eukaryota"/>
</dbReference>
<dbReference type="Proteomes" id="UP000028761">
    <property type="component" value="Unplaced"/>
</dbReference>
<dbReference type="GO" id="GO:0005615">
    <property type="term" value="C:extracellular space"/>
    <property type="evidence" value="ECO:0007669"/>
    <property type="project" value="InterPro"/>
</dbReference>
<dbReference type="GO" id="GO:0004867">
    <property type="term" value="F:serine-type endopeptidase inhibitor activity"/>
    <property type="evidence" value="ECO:0007669"/>
    <property type="project" value="UniProtKB-KW"/>
</dbReference>
<dbReference type="GO" id="GO:0006953">
    <property type="term" value="P:acute-phase response"/>
    <property type="evidence" value="ECO:0007669"/>
    <property type="project" value="UniProtKB-KW"/>
</dbReference>
<dbReference type="CDD" id="cd02056">
    <property type="entry name" value="serpinA1_A1AT"/>
    <property type="match status" value="1"/>
</dbReference>
<dbReference type="FunFam" id="2.30.39.10:FF:000003">
    <property type="entry name" value="alpha-1-antitrypsin isoform X1"/>
    <property type="match status" value="1"/>
</dbReference>
<dbReference type="FunFam" id="3.30.497.10:FF:000001">
    <property type="entry name" value="Serine protease inhibitor"/>
    <property type="match status" value="1"/>
</dbReference>
<dbReference type="FunFam" id="2.10.310.10:FF:000001">
    <property type="entry name" value="Serpin family A member 1"/>
    <property type="match status" value="1"/>
</dbReference>
<dbReference type="Gene3D" id="2.30.39.10">
    <property type="entry name" value="Alpha-1-antitrypsin, domain 1"/>
    <property type="match status" value="1"/>
</dbReference>
<dbReference type="Gene3D" id="3.30.497.10">
    <property type="entry name" value="Antithrombin, subunit I, domain 2"/>
    <property type="match status" value="1"/>
</dbReference>
<dbReference type="Gene3D" id="2.10.310.10">
    <property type="entry name" value="Serpins superfamily"/>
    <property type="match status" value="1"/>
</dbReference>
<dbReference type="InterPro" id="IPR023795">
    <property type="entry name" value="Serpin_CS"/>
</dbReference>
<dbReference type="InterPro" id="IPR023796">
    <property type="entry name" value="Serpin_dom"/>
</dbReference>
<dbReference type="InterPro" id="IPR000215">
    <property type="entry name" value="Serpin_fam"/>
</dbReference>
<dbReference type="InterPro" id="IPR036186">
    <property type="entry name" value="Serpin_sf"/>
</dbReference>
<dbReference type="InterPro" id="IPR042178">
    <property type="entry name" value="Serpin_sf_1"/>
</dbReference>
<dbReference type="InterPro" id="IPR042185">
    <property type="entry name" value="Serpin_sf_2"/>
</dbReference>
<dbReference type="PANTHER" id="PTHR11461:SF165">
    <property type="entry name" value="ALPHA-1-ANTITRYPSIN"/>
    <property type="match status" value="1"/>
</dbReference>
<dbReference type="PANTHER" id="PTHR11461">
    <property type="entry name" value="SERINE PROTEASE INHIBITOR, SERPIN"/>
    <property type="match status" value="1"/>
</dbReference>
<dbReference type="Pfam" id="PF00079">
    <property type="entry name" value="Serpin"/>
    <property type="match status" value="1"/>
</dbReference>
<dbReference type="SMART" id="SM00093">
    <property type="entry name" value="SERPIN"/>
    <property type="match status" value="1"/>
</dbReference>
<dbReference type="SUPFAM" id="SSF56574">
    <property type="entry name" value="Serpins"/>
    <property type="match status" value="1"/>
</dbReference>
<dbReference type="PROSITE" id="PS00284">
    <property type="entry name" value="SERPIN"/>
    <property type="match status" value="1"/>
</dbReference>
<feature type="signal peptide">
    <location>
        <begin position="1" status="less than"/>
        <end position="15"/>
    </location>
</feature>
<feature type="chain" id="PRO_0000032378" description="Alpha-1-antitrypsin">
    <location>
        <begin position="16"/>
        <end position="409"/>
    </location>
</feature>
<feature type="region of interest" description="Disordered" evidence="4">
    <location>
        <begin position="18"/>
        <end position="39"/>
    </location>
</feature>
<feature type="region of interest" description="RCL">
    <location>
        <begin position="364"/>
        <end position="383"/>
    </location>
</feature>
<feature type="site" description="Reactive bond">
    <location>
        <begin position="373"/>
        <end position="374"/>
    </location>
</feature>
<feature type="modified residue" description="Phosphoserine" evidence="2">
    <location>
        <position position="374"/>
    </location>
</feature>
<feature type="glycosylation site" description="N-linked (GlcNAc...) asparagine" evidence="3">
    <location>
        <position position="61"/>
    </location>
</feature>
<feature type="glycosylation site" description="N-linked (GlcNAc...) asparagine" evidence="3">
    <location>
        <position position="98"/>
    </location>
</feature>
<feature type="glycosylation site" description="N-linked (GlcNAc...) asparagine" evidence="3">
    <location>
        <position position="136"/>
    </location>
</feature>
<feature type="glycosylation site" description="N-linked (GlcNAc...) asparagine" evidence="3">
    <location>
        <position position="262"/>
    </location>
</feature>
<feature type="non-terminal residue">
    <location>
        <position position="1"/>
    </location>
</feature>
<comment type="function">
    <text evidence="1">Inhibitor of serine proteases. Its primary target is elastase, but it also has a moderate affinity for plasmin and thrombin. Inhibits trypsin, chymotrypsin and plasminogen activator (By similarity).</text>
</comment>
<comment type="subunit">
    <text evidence="2">Interacts with CELA2A (By similarity). Interacts with ERGIC3 and LMAN1/ERGIC53 (By similarity). Interacts with PRSS1/Trypsin (By similarity).</text>
</comment>
<comment type="subcellular location">
    <subcellularLocation>
        <location evidence="1">Secreted</location>
    </subcellularLocation>
</comment>
<comment type="tissue specificity">
    <text>Plasma.</text>
</comment>
<comment type="domain">
    <text evidence="1">The reactive center loop (RCL) extends out from the body of the protein and directs binding to the target protease. The protease cleaves the serpin at the reactive site within the RCL, establishing a covalent linkage between the carboxyl group of the serpin reactive site and the serine hydroxyl of the protease. The resulting inactive serpin-protease complex is highly stable (By similarity).</text>
</comment>
<comment type="similarity">
    <text evidence="5">Belongs to the serpin family.</text>
</comment>
<protein>
    <recommendedName>
        <fullName>Alpha-1-antitrypsin</fullName>
        <shortName>AAT</shortName>
    </recommendedName>
    <alternativeName>
        <fullName>Alpha-1 protease inhibitor</fullName>
    </alternativeName>
    <alternativeName>
        <fullName>Alpha-1-antiproteinase</fullName>
    </alternativeName>
    <alternativeName>
        <fullName>Serpin A1</fullName>
    </alternativeName>
</protein>
<keyword id="KW-0011">Acute phase</keyword>
<keyword id="KW-0325">Glycoprotein</keyword>
<keyword id="KW-0597">Phosphoprotein</keyword>
<keyword id="KW-0646">Protease inhibitor</keyword>
<keyword id="KW-1185">Reference proteome</keyword>
<keyword id="KW-0964">Secreted</keyword>
<keyword id="KW-0722">Serine protease inhibitor</keyword>
<keyword id="KW-0732">Signal</keyword>
<organism>
    <name type="scientific">Papio anubis</name>
    <name type="common">Olive baboon</name>
    <dbReference type="NCBI Taxonomy" id="9555"/>
    <lineage>
        <taxon>Eukaryota</taxon>
        <taxon>Metazoa</taxon>
        <taxon>Chordata</taxon>
        <taxon>Craniata</taxon>
        <taxon>Vertebrata</taxon>
        <taxon>Euteleostomi</taxon>
        <taxon>Mammalia</taxon>
        <taxon>Eutheria</taxon>
        <taxon>Euarchontoglires</taxon>
        <taxon>Primates</taxon>
        <taxon>Haplorrhini</taxon>
        <taxon>Catarrhini</taxon>
        <taxon>Cercopithecidae</taxon>
        <taxon>Cercopithecinae</taxon>
        <taxon>Papio</taxon>
    </lineage>
</organism>
<proteinExistence type="evidence at transcript level"/>
<gene>
    <name type="primary">SERPINA1</name>
    <name type="synonym">PI</name>
</gene>